<feature type="chain" id="PRO_1000186492" description="Bifunctional protein GlmU">
    <location>
        <begin position="1"/>
        <end position="454"/>
    </location>
</feature>
<feature type="region of interest" description="Pyrophosphorylase" evidence="1">
    <location>
        <begin position="1"/>
        <end position="229"/>
    </location>
</feature>
<feature type="region of interest" description="Linker" evidence="1">
    <location>
        <begin position="230"/>
        <end position="250"/>
    </location>
</feature>
<feature type="region of interest" description="N-acetyltransferase" evidence="1">
    <location>
        <begin position="251"/>
        <end position="454"/>
    </location>
</feature>
<feature type="active site" description="Proton acceptor" evidence="1">
    <location>
        <position position="362"/>
    </location>
</feature>
<feature type="binding site" evidence="1">
    <location>
        <begin position="8"/>
        <end position="11"/>
    </location>
    <ligand>
        <name>UDP-N-acetyl-alpha-D-glucosamine</name>
        <dbReference type="ChEBI" id="CHEBI:57705"/>
    </ligand>
</feature>
<feature type="binding site" evidence="1">
    <location>
        <position position="22"/>
    </location>
    <ligand>
        <name>UDP-N-acetyl-alpha-D-glucosamine</name>
        <dbReference type="ChEBI" id="CHEBI:57705"/>
    </ligand>
</feature>
<feature type="binding site" evidence="1">
    <location>
        <position position="72"/>
    </location>
    <ligand>
        <name>UDP-N-acetyl-alpha-D-glucosamine</name>
        <dbReference type="ChEBI" id="CHEBI:57705"/>
    </ligand>
</feature>
<feature type="binding site" evidence="1">
    <location>
        <begin position="77"/>
        <end position="78"/>
    </location>
    <ligand>
        <name>UDP-N-acetyl-alpha-D-glucosamine</name>
        <dbReference type="ChEBI" id="CHEBI:57705"/>
    </ligand>
</feature>
<feature type="binding site" evidence="1">
    <location>
        <position position="102"/>
    </location>
    <ligand>
        <name>Mg(2+)</name>
        <dbReference type="ChEBI" id="CHEBI:18420"/>
    </ligand>
</feature>
<feature type="binding site" evidence="1">
    <location>
        <position position="139"/>
    </location>
    <ligand>
        <name>UDP-N-acetyl-alpha-D-glucosamine</name>
        <dbReference type="ChEBI" id="CHEBI:57705"/>
    </ligand>
</feature>
<feature type="binding site" evidence="1">
    <location>
        <position position="154"/>
    </location>
    <ligand>
        <name>UDP-N-acetyl-alpha-D-glucosamine</name>
        <dbReference type="ChEBI" id="CHEBI:57705"/>
    </ligand>
</feature>
<feature type="binding site" evidence="1">
    <location>
        <position position="227"/>
    </location>
    <ligand>
        <name>Mg(2+)</name>
        <dbReference type="ChEBI" id="CHEBI:18420"/>
    </ligand>
</feature>
<feature type="binding site" evidence="1">
    <location>
        <position position="227"/>
    </location>
    <ligand>
        <name>UDP-N-acetyl-alpha-D-glucosamine</name>
        <dbReference type="ChEBI" id="CHEBI:57705"/>
    </ligand>
</feature>
<feature type="binding site" evidence="1">
    <location>
        <position position="332"/>
    </location>
    <ligand>
        <name>UDP-N-acetyl-alpha-D-glucosamine</name>
        <dbReference type="ChEBI" id="CHEBI:57705"/>
    </ligand>
</feature>
<feature type="binding site" evidence="1">
    <location>
        <position position="350"/>
    </location>
    <ligand>
        <name>UDP-N-acetyl-alpha-D-glucosamine</name>
        <dbReference type="ChEBI" id="CHEBI:57705"/>
    </ligand>
</feature>
<feature type="binding site" evidence="1">
    <location>
        <position position="365"/>
    </location>
    <ligand>
        <name>UDP-N-acetyl-alpha-D-glucosamine</name>
        <dbReference type="ChEBI" id="CHEBI:57705"/>
    </ligand>
</feature>
<feature type="binding site" evidence="1">
    <location>
        <position position="376"/>
    </location>
    <ligand>
        <name>UDP-N-acetyl-alpha-D-glucosamine</name>
        <dbReference type="ChEBI" id="CHEBI:57705"/>
    </ligand>
</feature>
<feature type="binding site" evidence="1">
    <location>
        <begin position="385"/>
        <end position="386"/>
    </location>
    <ligand>
        <name>acetyl-CoA</name>
        <dbReference type="ChEBI" id="CHEBI:57288"/>
    </ligand>
</feature>
<feature type="binding site" evidence="1">
    <location>
        <position position="422"/>
    </location>
    <ligand>
        <name>acetyl-CoA</name>
        <dbReference type="ChEBI" id="CHEBI:57288"/>
    </ligand>
</feature>
<feature type="binding site" evidence="1">
    <location>
        <position position="439"/>
    </location>
    <ligand>
        <name>acetyl-CoA</name>
        <dbReference type="ChEBI" id="CHEBI:57288"/>
    </ligand>
</feature>
<accession>B9DLD6</accession>
<organism>
    <name type="scientific">Staphylococcus carnosus (strain TM300)</name>
    <dbReference type="NCBI Taxonomy" id="396513"/>
    <lineage>
        <taxon>Bacteria</taxon>
        <taxon>Bacillati</taxon>
        <taxon>Bacillota</taxon>
        <taxon>Bacilli</taxon>
        <taxon>Bacillales</taxon>
        <taxon>Staphylococcaceae</taxon>
        <taxon>Staphylococcus</taxon>
    </lineage>
</organism>
<sequence>MQRYAVVLAAGKGTRMKSKLYKVLHKVADKTMIEHVVNSVQQSGADQIVTIVGHGAERVKDTLGDQSAYGFQEEQLGTAHAVKMAADELKDREGTTLVVCGDTPLITADTLNALVKHHEDNQADATVLSATAPNPFGYGRIVRDEEGRLSNIVEQKDASEAEQQIDEISSGIFAFDNQTLFRLLDKVKNDNAQGEYYLPDVLSLILEEGGKAEVYHTNDFDEIMGVNDRVALSKAEQAMRQRINEYHMRNGVTLIDPSSTYIASDVIIGMDTVIEPGVHIGSGTQIGEDTVIGQYSDINRSTIGDRTTVKQSVINDATVGDDTTVGPFAQLRPNAHLGNEVKVGNFVEVKKADIKDGAKVSHLSYIGDAEIGERTNIGCGSITVNYDGKNKFKTIIGKDSFIGCNTNLVAPVILGDDVLIAAGSTITDDVPNDSLALARSRQTTKPGYLNKNKE</sequence>
<dbReference type="EC" id="2.7.7.23" evidence="1"/>
<dbReference type="EC" id="2.3.1.157" evidence="1"/>
<dbReference type="EMBL" id="AM295250">
    <property type="protein sequence ID" value="CAL27062.1"/>
    <property type="molecule type" value="Genomic_DNA"/>
</dbReference>
<dbReference type="RefSeq" id="WP_012664177.1">
    <property type="nucleotide sequence ID" value="NC_012121.1"/>
</dbReference>
<dbReference type="SMR" id="B9DLD6"/>
<dbReference type="GeneID" id="93795063"/>
<dbReference type="KEGG" id="sca:SCA_0149"/>
<dbReference type="eggNOG" id="COG1207">
    <property type="taxonomic scope" value="Bacteria"/>
</dbReference>
<dbReference type="HOGENOM" id="CLU_029499_15_2_9"/>
<dbReference type="OrthoDB" id="9775031at2"/>
<dbReference type="BioCyc" id="SCAR396513:SCA_RS00720-MONOMER"/>
<dbReference type="UniPathway" id="UPA00113">
    <property type="reaction ID" value="UER00532"/>
</dbReference>
<dbReference type="UniPathway" id="UPA00113">
    <property type="reaction ID" value="UER00533"/>
</dbReference>
<dbReference type="UniPathway" id="UPA00973"/>
<dbReference type="Proteomes" id="UP000000444">
    <property type="component" value="Chromosome"/>
</dbReference>
<dbReference type="GO" id="GO:0005737">
    <property type="term" value="C:cytoplasm"/>
    <property type="evidence" value="ECO:0007669"/>
    <property type="project" value="UniProtKB-SubCell"/>
</dbReference>
<dbReference type="GO" id="GO:0016020">
    <property type="term" value="C:membrane"/>
    <property type="evidence" value="ECO:0007669"/>
    <property type="project" value="GOC"/>
</dbReference>
<dbReference type="GO" id="GO:0019134">
    <property type="term" value="F:glucosamine-1-phosphate N-acetyltransferase activity"/>
    <property type="evidence" value="ECO:0007669"/>
    <property type="project" value="UniProtKB-UniRule"/>
</dbReference>
<dbReference type="GO" id="GO:0000287">
    <property type="term" value="F:magnesium ion binding"/>
    <property type="evidence" value="ECO:0007669"/>
    <property type="project" value="UniProtKB-UniRule"/>
</dbReference>
<dbReference type="GO" id="GO:0003977">
    <property type="term" value="F:UDP-N-acetylglucosamine diphosphorylase activity"/>
    <property type="evidence" value="ECO:0007669"/>
    <property type="project" value="UniProtKB-UniRule"/>
</dbReference>
<dbReference type="GO" id="GO:0000902">
    <property type="term" value="P:cell morphogenesis"/>
    <property type="evidence" value="ECO:0007669"/>
    <property type="project" value="UniProtKB-UniRule"/>
</dbReference>
<dbReference type="GO" id="GO:0071555">
    <property type="term" value="P:cell wall organization"/>
    <property type="evidence" value="ECO:0007669"/>
    <property type="project" value="UniProtKB-KW"/>
</dbReference>
<dbReference type="GO" id="GO:0009245">
    <property type="term" value="P:lipid A biosynthetic process"/>
    <property type="evidence" value="ECO:0007669"/>
    <property type="project" value="UniProtKB-UniRule"/>
</dbReference>
<dbReference type="GO" id="GO:0009252">
    <property type="term" value="P:peptidoglycan biosynthetic process"/>
    <property type="evidence" value="ECO:0007669"/>
    <property type="project" value="UniProtKB-UniRule"/>
</dbReference>
<dbReference type="GO" id="GO:0008360">
    <property type="term" value="P:regulation of cell shape"/>
    <property type="evidence" value="ECO:0007669"/>
    <property type="project" value="UniProtKB-KW"/>
</dbReference>
<dbReference type="GO" id="GO:0006048">
    <property type="term" value="P:UDP-N-acetylglucosamine biosynthetic process"/>
    <property type="evidence" value="ECO:0007669"/>
    <property type="project" value="UniProtKB-UniPathway"/>
</dbReference>
<dbReference type="CDD" id="cd02540">
    <property type="entry name" value="GT2_GlmU_N_bac"/>
    <property type="match status" value="1"/>
</dbReference>
<dbReference type="CDD" id="cd03353">
    <property type="entry name" value="LbH_GlmU_C"/>
    <property type="match status" value="1"/>
</dbReference>
<dbReference type="Gene3D" id="2.160.10.10">
    <property type="entry name" value="Hexapeptide repeat proteins"/>
    <property type="match status" value="1"/>
</dbReference>
<dbReference type="Gene3D" id="3.90.550.10">
    <property type="entry name" value="Spore Coat Polysaccharide Biosynthesis Protein SpsA, Chain A"/>
    <property type="match status" value="1"/>
</dbReference>
<dbReference type="HAMAP" id="MF_01631">
    <property type="entry name" value="GlmU"/>
    <property type="match status" value="1"/>
</dbReference>
<dbReference type="InterPro" id="IPR005882">
    <property type="entry name" value="Bifunctional_GlmU"/>
</dbReference>
<dbReference type="InterPro" id="IPR050065">
    <property type="entry name" value="GlmU-like"/>
</dbReference>
<dbReference type="InterPro" id="IPR038009">
    <property type="entry name" value="GlmU_C_LbH"/>
</dbReference>
<dbReference type="InterPro" id="IPR001451">
    <property type="entry name" value="Hexapep"/>
</dbReference>
<dbReference type="InterPro" id="IPR018357">
    <property type="entry name" value="Hexapep_transf_CS"/>
</dbReference>
<dbReference type="InterPro" id="IPR005835">
    <property type="entry name" value="NTP_transferase_dom"/>
</dbReference>
<dbReference type="InterPro" id="IPR029044">
    <property type="entry name" value="Nucleotide-diphossugar_trans"/>
</dbReference>
<dbReference type="InterPro" id="IPR011004">
    <property type="entry name" value="Trimer_LpxA-like_sf"/>
</dbReference>
<dbReference type="NCBIfam" id="TIGR01173">
    <property type="entry name" value="glmU"/>
    <property type="match status" value="1"/>
</dbReference>
<dbReference type="NCBIfam" id="NF010934">
    <property type="entry name" value="PRK14354.1"/>
    <property type="match status" value="1"/>
</dbReference>
<dbReference type="PANTHER" id="PTHR43584:SF3">
    <property type="entry name" value="BIFUNCTIONAL PROTEIN GLMU"/>
    <property type="match status" value="1"/>
</dbReference>
<dbReference type="PANTHER" id="PTHR43584">
    <property type="entry name" value="NUCLEOTIDYL TRANSFERASE"/>
    <property type="match status" value="1"/>
</dbReference>
<dbReference type="Pfam" id="PF00132">
    <property type="entry name" value="Hexapep"/>
    <property type="match status" value="3"/>
</dbReference>
<dbReference type="Pfam" id="PF00483">
    <property type="entry name" value="NTP_transferase"/>
    <property type="match status" value="1"/>
</dbReference>
<dbReference type="SUPFAM" id="SSF53448">
    <property type="entry name" value="Nucleotide-diphospho-sugar transferases"/>
    <property type="match status" value="1"/>
</dbReference>
<dbReference type="SUPFAM" id="SSF51161">
    <property type="entry name" value="Trimeric LpxA-like enzymes"/>
    <property type="match status" value="1"/>
</dbReference>
<dbReference type="PROSITE" id="PS00101">
    <property type="entry name" value="HEXAPEP_TRANSFERASES"/>
    <property type="match status" value="1"/>
</dbReference>
<evidence type="ECO:0000255" key="1">
    <source>
        <dbReference type="HAMAP-Rule" id="MF_01631"/>
    </source>
</evidence>
<name>GLMU_STACT</name>
<gene>
    <name evidence="1" type="primary">glmU</name>
    <name type="ordered locus">Sca_0149</name>
</gene>
<proteinExistence type="inferred from homology"/>
<reference key="1">
    <citation type="journal article" date="2009" name="Appl. Environ. Microbiol.">
        <title>Genome analysis of the meat starter culture bacterium Staphylococcus carnosus TM300.</title>
        <authorList>
            <person name="Rosenstein R."/>
            <person name="Nerz C."/>
            <person name="Biswas L."/>
            <person name="Resch A."/>
            <person name="Raddatz G."/>
            <person name="Schuster S.C."/>
            <person name="Goetz F."/>
        </authorList>
    </citation>
    <scope>NUCLEOTIDE SEQUENCE [LARGE SCALE GENOMIC DNA]</scope>
    <source>
        <strain>TM300</strain>
    </source>
</reference>
<comment type="function">
    <text evidence="1">Catalyzes the last two sequential reactions in the de novo biosynthetic pathway for UDP-N-acetylglucosamine (UDP-GlcNAc). The C-terminal domain catalyzes the transfer of acetyl group from acetyl coenzyme A to glucosamine-1-phosphate (GlcN-1-P) to produce N-acetylglucosamine-1-phosphate (GlcNAc-1-P), which is converted into UDP-GlcNAc by the transfer of uridine 5-monophosphate (from uridine 5-triphosphate), a reaction catalyzed by the N-terminal domain.</text>
</comment>
<comment type="catalytic activity">
    <reaction evidence="1">
        <text>alpha-D-glucosamine 1-phosphate + acetyl-CoA = N-acetyl-alpha-D-glucosamine 1-phosphate + CoA + H(+)</text>
        <dbReference type="Rhea" id="RHEA:13725"/>
        <dbReference type="ChEBI" id="CHEBI:15378"/>
        <dbReference type="ChEBI" id="CHEBI:57287"/>
        <dbReference type="ChEBI" id="CHEBI:57288"/>
        <dbReference type="ChEBI" id="CHEBI:57776"/>
        <dbReference type="ChEBI" id="CHEBI:58516"/>
        <dbReference type="EC" id="2.3.1.157"/>
    </reaction>
</comment>
<comment type="catalytic activity">
    <reaction evidence="1">
        <text>N-acetyl-alpha-D-glucosamine 1-phosphate + UTP + H(+) = UDP-N-acetyl-alpha-D-glucosamine + diphosphate</text>
        <dbReference type="Rhea" id="RHEA:13509"/>
        <dbReference type="ChEBI" id="CHEBI:15378"/>
        <dbReference type="ChEBI" id="CHEBI:33019"/>
        <dbReference type="ChEBI" id="CHEBI:46398"/>
        <dbReference type="ChEBI" id="CHEBI:57705"/>
        <dbReference type="ChEBI" id="CHEBI:57776"/>
        <dbReference type="EC" id="2.7.7.23"/>
    </reaction>
</comment>
<comment type="cofactor">
    <cofactor evidence="1">
        <name>Mg(2+)</name>
        <dbReference type="ChEBI" id="CHEBI:18420"/>
    </cofactor>
    <text evidence="1">Binds 1 Mg(2+) ion per subunit.</text>
</comment>
<comment type="pathway">
    <text evidence="1">Nucleotide-sugar biosynthesis; UDP-N-acetyl-alpha-D-glucosamine biosynthesis; N-acetyl-alpha-D-glucosamine 1-phosphate from alpha-D-glucosamine 6-phosphate (route II): step 2/2.</text>
</comment>
<comment type="pathway">
    <text evidence="1">Nucleotide-sugar biosynthesis; UDP-N-acetyl-alpha-D-glucosamine biosynthesis; UDP-N-acetyl-alpha-D-glucosamine from N-acetyl-alpha-D-glucosamine 1-phosphate: step 1/1.</text>
</comment>
<comment type="pathway">
    <text evidence="1">Bacterial outer membrane biogenesis; LPS lipid A biosynthesis.</text>
</comment>
<comment type="subunit">
    <text evidence="1">Homotrimer.</text>
</comment>
<comment type="subcellular location">
    <subcellularLocation>
        <location evidence="1">Cytoplasm</location>
    </subcellularLocation>
</comment>
<comment type="similarity">
    <text evidence="1">In the N-terminal section; belongs to the N-acetylglucosamine-1-phosphate uridyltransferase family.</text>
</comment>
<comment type="similarity">
    <text evidence="1">In the C-terminal section; belongs to the transferase hexapeptide repeat family.</text>
</comment>
<protein>
    <recommendedName>
        <fullName evidence="1">Bifunctional protein GlmU</fullName>
    </recommendedName>
    <domain>
        <recommendedName>
            <fullName evidence="1">UDP-N-acetylglucosamine pyrophosphorylase</fullName>
            <ecNumber evidence="1">2.7.7.23</ecNumber>
        </recommendedName>
        <alternativeName>
            <fullName evidence="1">N-acetylglucosamine-1-phosphate uridyltransferase</fullName>
        </alternativeName>
    </domain>
    <domain>
        <recommendedName>
            <fullName evidence="1">Glucosamine-1-phosphate N-acetyltransferase</fullName>
            <ecNumber evidence="1">2.3.1.157</ecNumber>
        </recommendedName>
    </domain>
</protein>
<keyword id="KW-0012">Acyltransferase</keyword>
<keyword id="KW-0133">Cell shape</keyword>
<keyword id="KW-0961">Cell wall biogenesis/degradation</keyword>
<keyword id="KW-0963">Cytoplasm</keyword>
<keyword id="KW-0460">Magnesium</keyword>
<keyword id="KW-0479">Metal-binding</keyword>
<keyword id="KW-0511">Multifunctional enzyme</keyword>
<keyword id="KW-0548">Nucleotidyltransferase</keyword>
<keyword id="KW-0573">Peptidoglycan synthesis</keyword>
<keyword id="KW-1185">Reference proteome</keyword>
<keyword id="KW-0677">Repeat</keyword>
<keyword id="KW-0808">Transferase</keyword>